<accession>Q8PZ92</accession>
<comment type="function">
    <text evidence="1">Required for the formation of a threonylcarbamoyl group on adenosine at position 37 (t(6)A37) in tRNAs that read codons beginning with adenine. Is a component of the KEOPS complex that is probably involved in the transfer of the threonylcarbamoyl moiety of threonylcarbamoyl-AMP (TC-AMP) to the N6 group of A37. The Kae1 domain likely plays a direct catalytic role in this reaction. The Bud32 domain probably displays kinase activity that regulates Kae1 function.</text>
</comment>
<comment type="catalytic activity">
    <reaction evidence="1">
        <text>L-seryl-[protein] + ATP = O-phospho-L-seryl-[protein] + ADP + H(+)</text>
        <dbReference type="Rhea" id="RHEA:17989"/>
        <dbReference type="Rhea" id="RHEA-COMP:9863"/>
        <dbReference type="Rhea" id="RHEA-COMP:11604"/>
        <dbReference type="ChEBI" id="CHEBI:15378"/>
        <dbReference type="ChEBI" id="CHEBI:29999"/>
        <dbReference type="ChEBI" id="CHEBI:30616"/>
        <dbReference type="ChEBI" id="CHEBI:83421"/>
        <dbReference type="ChEBI" id="CHEBI:456216"/>
        <dbReference type="EC" id="2.7.11.1"/>
    </reaction>
</comment>
<comment type="catalytic activity">
    <reaction evidence="1">
        <text>L-threonyl-[protein] + ATP = O-phospho-L-threonyl-[protein] + ADP + H(+)</text>
        <dbReference type="Rhea" id="RHEA:46608"/>
        <dbReference type="Rhea" id="RHEA-COMP:11060"/>
        <dbReference type="Rhea" id="RHEA-COMP:11605"/>
        <dbReference type="ChEBI" id="CHEBI:15378"/>
        <dbReference type="ChEBI" id="CHEBI:30013"/>
        <dbReference type="ChEBI" id="CHEBI:30616"/>
        <dbReference type="ChEBI" id="CHEBI:61977"/>
        <dbReference type="ChEBI" id="CHEBI:456216"/>
        <dbReference type="EC" id="2.7.11.1"/>
    </reaction>
</comment>
<comment type="catalytic activity">
    <reaction evidence="1">
        <text>L-threonylcarbamoyladenylate + adenosine(37) in tRNA = N(6)-L-threonylcarbamoyladenosine(37) in tRNA + AMP + H(+)</text>
        <dbReference type="Rhea" id="RHEA:37059"/>
        <dbReference type="Rhea" id="RHEA-COMP:10162"/>
        <dbReference type="Rhea" id="RHEA-COMP:10163"/>
        <dbReference type="ChEBI" id="CHEBI:15378"/>
        <dbReference type="ChEBI" id="CHEBI:73682"/>
        <dbReference type="ChEBI" id="CHEBI:74411"/>
        <dbReference type="ChEBI" id="CHEBI:74418"/>
        <dbReference type="ChEBI" id="CHEBI:456215"/>
        <dbReference type="EC" id="2.3.1.234"/>
    </reaction>
</comment>
<comment type="cofactor">
    <cofactor evidence="1">
        <name>Fe(2+)</name>
        <dbReference type="ChEBI" id="CHEBI:29033"/>
    </cofactor>
    <text evidence="1">Binds 1 Fe(2+) ion per subunit.</text>
</comment>
<comment type="subunit">
    <text evidence="1">Component of the KEOPS complex that consists of Kae1, Bud32, Cgi121 and Pcc1; the whole complex dimerizes.</text>
</comment>
<comment type="subcellular location">
    <subcellularLocation>
        <location evidence="1">Cytoplasm</location>
    </subcellularLocation>
</comment>
<comment type="similarity">
    <text evidence="1">In the N-terminal section; belongs to the KAE1 / TsaD family.</text>
</comment>
<comment type="similarity">
    <text evidence="1">In the C-terminal section; belongs to the protein kinase superfamily. Tyr protein kinase family. BUD32 subfamily.</text>
</comment>
<comment type="sequence caution" evidence="2">
    <conflict type="erroneous initiation">
        <sequence resource="EMBL-CDS" id="AAM30298"/>
    </conflict>
    <text>Extended N-terminus.</text>
</comment>
<proteinExistence type="inferred from homology"/>
<reference key="1">
    <citation type="journal article" date="2002" name="J. Mol. Microbiol. Biotechnol.">
        <title>The genome of Methanosarcina mazei: evidence for lateral gene transfer between Bacteria and Archaea.</title>
        <authorList>
            <person name="Deppenmeier U."/>
            <person name="Johann A."/>
            <person name="Hartsch T."/>
            <person name="Merkl R."/>
            <person name="Schmitz R.A."/>
            <person name="Martinez-Arias R."/>
            <person name="Henne A."/>
            <person name="Wiezer A."/>
            <person name="Baeumer S."/>
            <person name="Jacobi C."/>
            <person name="Brueggemann H."/>
            <person name="Lienard T."/>
            <person name="Christmann A."/>
            <person name="Boemecke M."/>
            <person name="Steckel S."/>
            <person name="Bhattacharyya A."/>
            <person name="Lykidis A."/>
            <person name="Overbeek R."/>
            <person name="Klenk H.-P."/>
            <person name="Gunsalus R.P."/>
            <person name="Fritz H.-J."/>
            <person name="Gottschalk G."/>
        </authorList>
    </citation>
    <scope>NUCLEOTIDE SEQUENCE [LARGE SCALE GENOMIC DNA]</scope>
    <source>
        <strain>ATCC BAA-159 / DSM 3647 / Goe1 / Go1 / JCM 11833 / OCM 88</strain>
    </source>
</reference>
<keyword id="KW-0012">Acyltransferase</keyword>
<keyword id="KW-0067">ATP-binding</keyword>
<keyword id="KW-0963">Cytoplasm</keyword>
<keyword id="KW-0408">Iron</keyword>
<keyword id="KW-0418">Kinase</keyword>
<keyword id="KW-0479">Metal-binding</keyword>
<keyword id="KW-0511">Multifunctional enzyme</keyword>
<keyword id="KW-0547">Nucleotide-binding</keyword>
<keyword id="KW-0723">Serine/threonine-protein kinase</keyword>
<keyword id="KW-0808">Transferase</keyword>
<keyword id="KW-0819">tRNA processing</keyword>
<protein>
    <recommendedName>
        <fullName evidence="1">Probable bifunctional tRNA threonylcarbamoyladenosine biosynthesis protein</fullName>
    </recommendedName>
    <domain>
        <recommendedName>
            <fullName evidence="1">tRNA N6-adenosine threonylcarbamoyltransferase</fullName>
            <ecNumber evidence="1">2.3.1.234</ecNumber>
        </recommendedName>
        <alternativeName>
            <fullName>N6-L-threonylcarbamoyladenine synthase</fullName>
            <shortName>t(6)A synthase</shortName>
        </alternativeName>
        <alternativeName>
            <fullName evidence="1">t(6)A37 threonylcarbamoyladenosine biosynthesis protein Kae1</fullName>
        </alternativeName>
        <alternativeName>
            <fullName evidence="1">tRNA threonylcarbamoyladenosine biosynthesis protein Kae1</fullName>
        </alternativeName>
    </domain>
    <domain>
        <recommendedName>
            <fullName evidence="1">Serine/threonine-protein kinase Bud32</fullName>
            <ecNumber evidence="1">2.7.11.1</ecNumber>
        </recommendedName>
    </domain>
</protein>
<name>KAE1B_METMA</name>
<organism>
    <name type="scientific">Methanosarcina mazei (strain ATCC BAA-159 / DSM 3647 / Goe1 / Go1 / JCM 11833 / OCM 88)</name>
    <name type="common">Methanosarcina frisia</name>
    <dbReference type="NCBI Taxonomy" id="192952"/>
    <lineage>
        <taxon>Archaea</taxon>
        <taxon>Methanobacteriati</taxon>
        <taxon>Methanobacteriota</taxon>
        <taxon>Stenosarchaea group</taxon>
        <taxon>Methanomicrobia</taxon>
        <taxon>Methanosarcinales</taxon>
        <taxon>Methanosarcinaceae</taxon>
        <taxon>Methanosarcina</taxon>
    </lineage>
</organism>
<feature type="chain" id="PRO_0000303656" description="Probable bifunctional tRNA threonylcarbamoyladenosine biosynthesis protein">
    <location>
        <begin position="1"/>
        <end position="547"/>
    </location>
</feature>
<feature type="domain" description="Protein kinase" evidence="1">
    <location>
        <begin position="340"/>
        <end position="547"/>
    </location>
</feature>
<feature type="region of interest" description="Kae1">
    <location>
        <begin position="1"/>
        <end position="329"/>
    </location>
</feature>
<feature type="active site" description="Proton acceptor; for kinase activity" evidence="1">
    <location>
        <position position="464"/>
    </location>
</feature>
<feature type="binding site" evidence="1">
    <location>
        <position position="113"/>
    </location>
    <ligand>
        <name>Fe cation</name>
        <dbReference type="ChEBI" id="CHEBI:24875"/>
    </ligand>
</feature>
<feature type="binding site" evidence="1">
    <location>
        <position position="117"/>
    </location>
    <ligand>
        <name>Fe cation</name>
        <dbReference type="ChEBI" id="CHEBI:24875"/>
    </ligand>
</feature>
<feature type="binding site" evidence="1">
    <location>
        <begin position="134"/>
        <end position="138"/>
    </location>
    <ligand>
        <name>L-threonylcarbamoyladenylate</name>
        <dbReference type="ChEBI" id="CHEBI:73682"/>
    </ligand>
</feature>
<feature type="binding site" evidence="1">
    <location>
        <position position="134"/>
    </location>
    <ligand>
        <name>Fe cation</name>
        <dbReference type="ChEBI" id="CHEBI:24875"/>
    </ligand>
</feature>
<feature type="binding site" evidence="1">
    <location>
        <position position="166"/>
    </location>
    <ligand>
        <name>L-threonylcarbamoyladenylate</name>
        <dbReference type="ChEBI" id="CHEBI:73682"/>
    </ligand>
</feature>
<feature type="binding site" evidence="1">
    <location>
        <position position="179"/>
    </location>
    <ligand>
        <name>L-threonylcarbamoyladenylate</name>
        <dbReference type="ChEBI" id="CHEBI:73682"/>
    </ligand>
</feature>
<feature type="binding site" evidence="1">
    <location>
        <position position="183"/>
    </location>
    <ligand>
        <name>L-threonylcarbamoyladenylate</name>
        <dbReference type="ChEBI" id="CHEBI:73682"/>
    </ligand>
</feature>
<feature type="binding site" evidence="1">
    <location>
        <position position="262"/>
    </location>
    <ligand>
        <name>L-threonylcarbamoyladenylate</name>
        <dbReference type="ChEBI" id="CHEBI:73682"/>
    </ligand>
</feature>
<feature type="binding site" evidence="1">
    <location>
        <position position="290"/>
    </location>
    <ligand>
        <name>Fe cation</name>
        <dbReference type="ChEBI" id="CHEBI:24875"/>
    </ligand>
</feature>
<feature type="binding site" evidence="1">
    <location>
        <begin position="355"/>
        <end position="363"/>
    </location>
    <ligand>
        <name>ATP</name>
        <dbReference type="ChEBI" id="CHEBI:30616"/>
    </ligand>
</feature>
<feature type="binding site" evidence="1">
    <location>
        <position position="377"/>
    </location>
    <ligand>
        <name>ATP</name>
        <dbReference type="ChEBI" id="CHEBI:30616"/>
    </ligand>
</feature>
<evidence type="ECO:0000255" key="1">
    <source>
        <dbReference type="HAMAP-Rule" id="MF_01447"/>
    </source>
</evidence>
<evidence type="ECO:0000305" key="2"/>
<sequence>MKKTFILGIEGTAWNLSAAIVTETEIIAEVTETYKPEKGGIHPREAAQHHAKYAAGVIKKLLAEAKQNGIEPSDLDGIAFSQGPGLGPCLRTVATAARMLGLSLGIPLIGVNHCIAHIEIGIWKTPAKDPVVLYVSGANSQVISYMEGRYRVFGETLDIGLGNALDKFARGAGLPHPGGPKIEAYAKEAKRYIPLPYVIKGMDLSFSGLSTAASEALRKASLEDVCYSYQETAFAMVVEVAERALAHTGKKEVLLAGGVGANTRLREMLNEMCEARGAKFYVPEKRFMGDNGTMIAYTGLLMYKSGNTISLEDSRVNPSFRTDDVKVTWIKEEEMKKVPEISPETFFRMPPGEILDNGAEAVVYLQEGPEGKRALVKERVPKAYRHKEIDERIRRERNRTEARLMSEARRAGVPTPIIYDVEEFKLKMQFIEGVPIKYLITPPLSEKVGELVGKLHSSGIVHGDLTTSNLLLAGERLYLIDFGLAYFDKSLEARGVDVHVLFQTFESTHRNYEALVKAFEKGYASTFIDSEDVLRRVEEIKKRARYA</sequence>
<dbReference type="EC" id="2.3.1.234" evidence="1"/>
<dbReference type="EC" id="2.7.11.1" evidence="1"/>
<dbReference type="EMBL" id="AE008384">
    <property type="protein sequence ID" value="AAM30298.1"/>
    <property type="status" value="ALT_INIT"/>
    <property type="molecule type" value="Genomic_DNA"/>
</dbReference>
<dbReference type="SMR" id="Q8PZ92"/>
<dbReference type="KEGG" id="mma:MM_0602"/>
<dbReference type="PATRIC" id="fig|192952.21.peg.712"/>
<dbReference type="eggNOG" id="arCOG01183">
    <property type="taxonomic scope" value="Archaea"/>
</dbReference>
<dbReference type="eggNOG" id="arCOG01185">
    <property type="taxonomic scope" value="Archaea"/>
</dbReference>
<dbReference type="HOGENOM" id="CLU_023208_2_2_2"/>
<dbReference type="Proteomes" id="UP000000595">
    <property type="component" value="Chromosome"/>
</dbReference>
<dbReference type="GO" id="GO:0005737">
    <property type="term" value="C:cytoplasm"/>
    <property type="evidence" value="ECO:0007669"/>
    <property type="project" value="UniProtKB-SubCell"/>
</dbReference>
<dbReference type="GO" id="GO:0000408">
    <property type="term" value="C:EKC/KEOPS complex"/>
    <property type="evidence" value="ECO:0007669"/>
    <property type="project" value="InterPro"/>
</dbReference>
<dbReference type="GO" id="GO:0005524">
    <property type="term" value="F:ATP binding"/>
    <property type="evidence" value="ECO:0007669"/>
    <property type="project" value="UniProtKB-UniRule"/>
</dbReference>
<dbReference type="GO" id="GO:0005506">
    <property type="term" value="F:iron ion binding"/>
    <property type="evidence" value="ECO:0007669"/>
    <property type="project" value="UniProtKB-UniRule"/>
</dbReference>
<dbReference type="GO" id="GO:0004222">
    <property type="term" value="F:metalloendopeptidase activity"/>
    <property type="evidence" value="ECO:0007669"/>
    <property type="project" value="InterPro"/>
</dbReference>
<dbReference type="GO" id="GO:0061711">
    <property type="term" value="F:N(6)-L-threonylcarbamoyladenine synthase activity"/>
    <property type="evidence" value="ECO:0007669"/>
    <property type="project" value="UniProtKB-EC"/>
</dbReference>
<dbReference type="GO" id="GO:0106310">
    <property type="term" value="F:protein serine kinase activity"/>
    <property type="evidence" value="ECO:0007669"/>
    <property type="project" value="RHEA"/>
</dbReference>
<dbReference type="GO" id="GO:0004674">
    <property type="term" value="F:protein serine/threonine kinase activity"/>
    <property type="evidence" value="ECO:0007669"/>
    <property type="project" value="UniProtKB-KW"/>
</dbReference>
<dbReference type="GO" id="GO:0004712">
    <property type="term" value="F:protein serine/threonine/tyrosine kinase activity"/>
    <property type="evidence" value="ECO:0007669"/>
    <property type="project" value="UniProtKB-UniRule"/>
</dbReference>
<dbReference type="GO" id="GO:0008270">
    <property type="term" value="F:zinc ion binding"/>
    <property type="evidence" value="ECO:0007669"/>
    <property type="project" value="InterPro"/>
</dbReference>
<dbReference type="GO" id="GO:0002949">
    <property type="term" value="P:tRNA threonylcarbamoyladenosine modification"/>
    <property type="evidence" value="ECO:0007669"/>
    <property type="project" value="UniProtKB-UniRule"/>
</dbReference>
<dbReference type="CDD" id="cd24131">
    <property type="entry name" value="ASKHA_NBD_Kae1_arch_bac"/>
    <property type="match status" value="1"/>
</dbReference>
<dbReference type="FunFam" id="3.30.420.40:FF:000284">
    <property type="entry name" value="Probable bifunctional tRNA threonylcarbamoyladenosine biosynthesis protein"/>
    <property type="match status" value="1"/>
</dbReference>
<dbReference type="Gene3D" id="3.30.420.40">
    <property type="match status" value="2"/>
</dbReference>
<dbReference type="Gene3D" id="3.30.200.20">
    <property type="entry name" value="Phosphorylase Kinase, domain 1"/>
    <property type="match status" value="1"/>
</dbReference>
<dbReference type="Gene3D" id="1.10.510.10">
    <property type="entry name" value="Transferase(Phosphotransferase) domain 1"/>
    <property type="match status" value="1"/>
</dbReference>
<dbReference type="HAMAP" id="MF_01446">
    <property type="entry name" value="Kae1"/>
    <property type="match status" value="1"/>
</dbReference>
<dbReference type="HAMAP" id="MF_01447">
    <property type="entry name" value="Kae1_Bud32_arch"/>
    <property type="match status" value="1"/>
</dbReference>
<dbReference type="InterPro" id="IPR043129">
    <property type="entry name" value="ATPase_NBD"/>
</dbReference>
<dbReference type="InterPro" id="IPR022495">
    <property type="entry name" value="Bud32"/>
</dbReference>
<dbReference type="InterPro" id="IPR000905">
    <property type="entry name" value="Gcp-like_dom"/>
</dbReference>
<dbReference type="InterPro" id="IPR017861">
    <property type="entry name" value="KAE1/TsaD"/>
</dbReference>
<dbReference type="InterPro" id="IPR034680">
    <property type="entry name" value="Kae1_archaea_euk"/>
</dbReference>
<dbReference type="InterPro" id="IPR011009">
    <property type="entry name" value="Kinase-like_dom_sf"/>
</dbReference>
<dbReference type="InterPro" id="IPR018934">
    <property type="entry name" value="RIO_dom"/>
</dbReference>
<dbReference type="InterPro" id="IPR009220">
    <property type="entry name" value="tRNA_threonyl_synthase/kinase"/>
</dbReference>
<dbReference type="InterPro" id="IPR008266">
    <property type="entry name" value="Tyr_kinase_AS"/>
</dbReference>
<dbReference type="NCBIfam" id="TIGR03724">
    <property type="entry name" value="arch_bud32"/>
    <property type="match status" value="1"/>
</dbReference>
<dbReference type="NCBIfam" id="TIGR03722">
    <property type="entry name" value="arch_KAE1"/>
    <property type="match status" value="1"/>
</dbReference>
<dbReference type="NCBIfam" id="TIGR00329">
    <property type="entry name" value="gcp_kae1"/>
    <property type="match status" value="1"/>
</dbReference>
<dbReference type="NCBIfam" id="NF007174">
    <property type="entry name" value="PRK09605.1"/>
    <property type="match status" value="1"/>
</dbReference>
<dbReference type="NCBIfam" id="NF011462">
    <property type="entry name" value="PRK14879.1-3"/>
    <property type="match status" value="1"/>
</dbReference>
<dbReference type="PANTHER" id="PTHR11735">
    <property type="entry name" value="TRNA N6-ADENOSINE THREONYLCARBAMOYLTRANSFERASE"/>
    <property type="match status" value="1"/>
</dbReference>
<dbReference type="PANTHER" id="PTHR11735:SF14">
    <property type="entry name" value="TRNA N6-ADENOSINE THREONYLCARBAMOYLTRANSFERASE"/>
    <property type="match status" value="1"/>
</dbReference>
<dbReference type="Pfam" id="PF01163">
    <property type="entry name" value="RIO1"/>
    <property type="match status" value="1"/>
</dbReference>
<dbReference type="Pfam" id="PF00814">
    <property type="entry name" value="TsaD"/>
    <property type="match status" value="1"/>
</dbReference>
<dbReference type="PIRSF" id="PIRSF036401">
    <property type="entry name" value="Gcp_STYKS"/>
    <property type="match status" value="1"/>
</dbReference>
<dbReference type="PRINTS" id="PR00789">
    <property type="entry name" value="OSIALOPTASE"/>
</dbReference>
<dbReference type="SUPFAM" id="SSF53067">
    <property type="entry name" value="Actin-like ATPase domain"/>
    <property type="match status" value="1"/>
</dbReference>
<dbReference type="SUPFAM" id="SSF56112">
    <property type="entry name" value="Protein kinase-like (PK-like)"/>
    <property type="match status" value="1"/>
</dbReference>
<dbReference type="PROSITE" id="PS00109">
    <property type="entry name" value="PROTEIN_KINASE_TYR"/>
    <property type="match status" value="1"/>
</dbReference>
<gene>
    <name type="ordered locus">MM_0602</name>
</gene>